<feature type="signal peptide" evidence="2">
    <location>
        <begin position="1"/>
        <end position="23"/>
    </location>
</feature>
<feature type="chain" id="PRO_0000005315" description="Endochitinase PR4">
    <location>
        <begin position="24"/>
        <end position="270"/>
    </location>
</feature>
<feature type="domain" description="Chitin-binding type-1" evidence="3">
    <location>
        <begin position="24"/>
        <end position="58"/>
    </location>
</feature>
<feature type="active site" description="Proton donor" evidence="1">
    <location>
        <position position="132"/>
    </location>
</feature>
<feature type="disulfide bond" evidence="3">
    <location>
        <begin position="26"/>
        <end position="34"/>
    </location>
</feature>
<feature type="disulfide bond" evidence="3">
    <location>
        <begin position="28"/>
        <end position="40"/>
    </location>
</feature>
<feature type="disulfide bond" evidence="3">
    <location>
        <begin position="33"/>
        <end position="47"/>
    </location>
</feature>
<feature type="disulfide bond" evidence="3">
    <location>
        <begin position="51"/>
        <end position="56"/>
    </location>
</feature>
<feature type="disulfide bond" evidence="3">
    <location>
        <begin position="88"/>
        <end position="137"/>
    </location>
</feature>
<feature type="disulfide bond" evidence="3">
    <location>
        <begin position="150"/>
        <end position="160"/>
    </location>
</feature>
<feature type="disulfide bond" evidence="3">
    <location>
        <begin position="238"/>
        <end position="270"/>
    </location>
</feature>
<dbReference type="EC" id="3.2.1.14"/>
<dbReference type="EMBL" id="X57187">
    <property type="protein sequence ID" value="CAA40474.1"/>
    <property type="molecule type" value="mRNA"/>
</dbReference>
<dbReference type="PIR" id="S16579">
    <property type="entry name" value="S16579"/>
</dbReference>
<dbReference type="SMR" id="P27054"/>
<dbReference type="CAZy" id="CBM18">
    <property type="family name" value="Carbohydrate-Binding Module Family 18"/>
</dbReference>
<dbReference type="CAZy" id="GH19">
    <property type="family name" value="Glycoside Hydrolase Family 19"/>
</dbReference>
<dbReference type="eggNOG" id="KOG4742">
    <property type="taxonomic scope" value="Eukaryota"/>
</dbReference>
<dbReference type="GO" id="GO:0008061">
    <property type="term" value="F:chitin binding"/>
    <property type="evidence" value="ECO:0007669"/>
    <property type="project" value="UniProtKB-KW"/>
</dbReference>
<dbReference type="GO" id="GO:0008843">
    <property type="term" value="F:endochitinase activity"/>
    <property type="evidence" value="ECO:0007669"/>
    <property type="project" value="UniProtKB-EC"/>
</dbReference>
<dbReference type="GO" id="GO:0016998">
    <property type="term" value="P:cell wall macromolecule catabolic process"/>
    <property type="evidence" value="ECO:0007669"/>
    <property type="project" value="InterPro"/>
</dbReference>
<dbReference type="GO" id="GO:0006032">
    <property type="term" value="P:chitin catabolic process"/>
    <property type="evidence" value="ECO:0007669"/>
    <property type="project" value="UniProtKB-KW"/>
</dbReference>
<dbReference type="GO" id="GO:0006952">
    <property type="term" value="P:defense response"/>
    <property type="evidence" value="ECO:0007669"/>
    <property type="project" value="UniProtKB-KW"/>
</dbReference>
<dbReference type="GO" id="GO:0000272">
    <property type="term" value="P:polysaccharide catabolic process"/>
    <property type="evidence" value="ECO:0007669"/>
    <property type="project" value="UniProtKB-KW"/>
</dbReference>
<dbReference type="CDD" id="cd00325">
    <property type="entry name" value="chitinase_GH19"/>
    <property type="match status" value="1"/>
</dbReference>
<dbReference type="CDD" id="cd00035">
    <property type="entry name" value="ChtBD1"/>
    <property type="match status" value="1"/>
</dbReference>
<dbReference type="FunFam" id="3.30.60.10:FF:000003">
    <property type="entry name" value="Class IV chitinase"/>
    <property type="match status" value="1"/>
</dbReference>
<dbReference type="FunFam" id="3.30.20.10:FF:000001">
    <property type="entry name" value="Endochitinase (Chitinase)"/>
    <property type="match status" value="1"/>
</dbReference>
<dbReference type="FunFam" id="1.10.530.10:FF:000052">
    <property type="entry name" value="Endochitinase PR4"/>
    <property type="match status" value="1"/>
</dbReference>
<dbReference type="Gene3D" id="1.10.530.10">
    <property type="match status" value="1"/>
</dbReference>
<dbReference type="Gene3D" id="3.30.20.10">
    <property type="entry name" value="Endochitinase, domain 2"/>
    <property type="match status" value="1"/>
</dbReference>
<dbReference type="Gene3D" id="3.30.60.10">
    <property type="entry name" value="Endochitinase-like"/>
    <property type="match status" value="1"/>
</dbReference>
<dbReference type="InterPro" id="IPR001002">
    <property type="entry name" value="Chitin-bd_1"/>
</dbReference>
<dbReference type="InterPro" id="IPR018371">
    <property type="entry name" value="Chitin-binding_1_CS"/>
</dbReference>
<dbReference type="InterPro" id="IPR036861">
    <property type="entry name" value="Endochitinase-like_sf"/>
</dbReference>
<dbReference type="InterPro" id="IPR016283">
    <property type="entry name" value="Glyco_hydro_19"/>
</dbReference>
<dbReference type="InterPro" id="IPR000726">
    <property type="entry name" value="Glyco_hydro_19_cat"/>
</dbReference>
<dbReference type="InterPro" id="IPR023346">
    <property type="entry name" value="Lysozyme-like_dom_sf"/>
</dbReference>
<dbReference type="PANTHER" id="PTHR22595">
    <property type="entry name" value="CHITINASE-RELATED"/>
    <property type="match status" value="1"/>
</dbReference>
<dbReference type="PANTHER" id="PTHR22595:SF193">
    <property type="entry name" value="ENDOCHITINASE EP3"/>
    <property type="match status" value="1"/>
</dbReference>
<dbReference type="Pfam" id="PF00187">
    <property type="entry name" value="Chitin_bind_1"/>
    <property type="match status" value="1"/>
</dbReference>
<dbReference type="Pfam" id="PF00182">
    <property type="entry name" value="Glyco_hydro_19"/>
    <property type="match status" value="2"/>
</dbReference>
<dbReference type="PIRSF" id="PIRSF001060">
    <property type="entry name" value="Endochitinase"/>
    <property type="match status" value="1"/>
</dbReference>
<dbReference type="PRINTS" id="PR00451">
    <property type="entry name" value="CHITINBINDNG"/>
</dbReference>
<dbReference type="SMART" id="SM00270">
    <property type="entry name" value="ChtBD1"/>
    <property type="match status" value="1"/>
</dbReference>
<dbReference type="SUPFAM" id="SSF53955">
    <property type="entry name" value="Lysozyme-like"/>
    <property type="match status" value="1"/>
</dbReference>
<dbReference type="SUPFAM" id="SSF57016">
    <property type="entry name" value="Plant lectins/antimicrobial peptides"/>
    <property type="match status" value="1"/>
</dbReference>
<dbReference type="PROSITE" id="PS00026">
    <property type="entry name" value="CHIT_BIND_I_1"/>
    <property type="match status" value="1"/>
</dbReference>
<dbReference type="PROSITE" id="PS50941">
    <property type="entry name" value="CHIT_BIND_I_2"/>
    <property type="match status" value="1"/>
</dbReference>
<dbReference type="PROSITE" id="PS00773">
    <property type="entry name" value="CHITINASE_19_1"/>
    <property type="match status" value="1"/>
</dbReference>
<dbReference type="PROSITE" id="PS00774">
    <property type="entry name" value="CHITINASE_19_2"/>
    <property type="match status" value="1"/>
</dbReference>
<evidence type="ECO:0000250" key="1">
    <source>
        <dbReference type="UniProtKB" id="P29022"/>
    </source>
</evidence>
<evidence type="ECO:0000255" key="2"/>
<evidence type="ECO:0000255" key="3">
    <source>
        <dbReference type="PROSITE-ProRule" id="PRU00261"/>
    </source>
</evidence>
<evidence type="ECO:0000305" key="4"/>
<keyword id="KW-0119">Carbohydrate metabolism</keyword>
<keyword id="KW-0146">Chitin degradation</keyword>
<keyword id="KW-0147">Chitin-binding</keyword>
<keyword id="KW-1015">Disulfide bond</keyword>
<keyword id="KW-0326">Glycosidase</keyword>
<keyword id="KW-0378">Hydrolase</keyword>
<keyword id="KW-0611">Plant defense</keyword>
<keyword id="KW-0624">Polysaccharide degradation</keyword>
<keyword id="KW-0732">Signal</keyword>
<organism>
    <name type="scientific">Phaseolus vulgaris</name>
    <name type="common">Kidney bean</name>
    <name type="synonym">French bean</name>
    <dbReference type="NCBI Taxonomy" id="3885"/>
    <lineage>
        <taxon>Eukaryota</taxon>
        <taxon>Viridiplantae</taxon>
        <taxon>Streptophyta</taxon>
        <taxon>Embryophyta</taxon>
        <taxon>Tracheophyta</taxon>
        <taxon>Spermatophyta</taxon>
        <taxon>Magnoliopsida</taxon>
        <taxon>eudicotyledons</taxon>
        <taxon>Gunneridae</taxon>
        <taxon>Pentapetalae</taxon>
        <taxon>rosids</taxon>
        <taxon>fabids</taxon>
        <taxon>Fabales</taxon>
        <taxon>Fabaceae</taxon>
        <taxon>Papilionoideae</taxon>
        <taxon>50 kb inversion clade</taxon>
        <taxon>NPAAA clade</taxon>
        <taxon>indigoferoid/millettioid clade</taxon>
        <taxon>Phaseoleae</taxon>
        <taxon>Phaseolus</taxon>
    </lineage>
</organism>
<accession>P27054</accession>
<name>CHI4_PHAVU</name>
<proteinExistence type="evidence at transcript level"/>
<protein>
    <recommendedName>
        <fullName>Endochitinase PR4</fullName>
        <ecNumber>3.2.1.14</ecNumber>
    </recommendedName>
</protein>
<gene>
    <name type="primary">CHI4</name>
</gene>
<reference key="1">
    <citation type="journal article" date="1991" name="Plant Mol. Biol.">
        <title>Isolation of a complementary DNA encoding the bean PR4 chitinase: an acidic enzyme with an amino-terminus cysteine-rich domain.</title>
        <authorList>
            <person name="Margis-Pinheiro M."/>
            <person name="Metz-Boutigue M.-H."/>
            <person name="Awade A."/>
            <person name="de Tapia M."/>
            <person name="le Ret M."/>
            <person name="Burkard G."/>
        </authorList>
    </citation>
    <scope>NUCLEOTIDE SEQUENCE [MRNA]</scope>
</reference>
<reference key="2">
    <citation type="submission" date="1996-06" db="EMBL/GenBank/DDBJ databases">
        <authorList>
            <person name="Voegeli-Lange R."/>
        </authorList>
    </citation>
    <scope>SEQUENCE REVISION</scope>
</reference>
<comment type="function">
    <text>Defense against chitin-containing fungal pathogens.</text>
</comment>
<comment type="catalytic activity">
    <reaction>
        <text>Random endo-hydrolysis of N-acetyl-beta-D-glucosaminide (1-&gt;4)-beta-linkages in chitin and chitodextrins.</text>
        <dbReference type="EC" id="3.2.1.14"/>
    </reaction>
</comment>
<comment type="similarity">
    <text evidence="4">Belongs to the glycosyl hydrolase 19 family. Chitinase class I subfamily.</text>
</comment>
<sequence length="270" mass="28834">MGNKLVLVLVAVALVMGPKNVSAQNCGCAEGLCCSQYGYCGTGEDYCGTGCQQGPCTTASPPPSNNVNADILTADFLNGIIDQADSGCAGKNFYTRDAFLSALNSYTDFGRVGSEDDSKREIAAAFAHFTHETGHFCYIEEIDGASKDYCDEESIAQYPCSSSKGYHGRGPIQLSWNFNYGPAGSANNFDGLGAPETVSNDVVVSFKTALWYWMQHVRPVINQGFGATIRAINGALECDGANPTTVQARVNYYTEYCRQLGVATGDNLTC</sequence>